<accession>Q0TDR4</accession>
<protein>
    <recommendedName>
        <fullName evidence="1">Agmatinase</fullName>
        <ecNumber evidence="1">3.5.3.11</ecNumber>
    </recommendedName>
    <alternativeName>
        <fullName evidence="1">Agmatine ureohydrolase</fullName>
        <shortName evidence="1">AUH</shortName>
    </alternativeName>
</protein>
<gene>
    <name evidence="1" type="primary">speB</name>
    <name type="ordered locus">ECP_2931</name>
</gene>
<dbReference type="EC" id="3.5.3.11" evidence="1"/>
<dbReference type="EMBL" id="CP000247">
    <property type="protein sequence ID" value="ABG70915.1"/>
    <property type="molecule type" value="Genomic_DNA"/>
</dbReference>
<dbReference type="RefSeq" id="WP_000105562.1">
    <property type="nucleotide sequence ID" value="NC_008253.1"/>
</dbReference>
<dbReference type="SMR" id="Q0TDR4"/>
<dbReference type="KEGG" id="ecp:ECP_2931"/>
<dbReference type="HOGENOM" id="CLU_039478_0_0_6"/>
<dbReference type="UniPathway" id="UPA00534">
    <property type="reaction ID" value="UER00287"/>
</dbReference>
<dbReference type="Proteomes" id="UP000009182">
    <property type="component" value="Chromosome"/>
</dbReference>
<dbReference type="GO" id="GO:0008783">
    <property type="term" value="F:agmatinase activity"/>
    <property type="evidence" value="ECO:0007669"/>
    <property type="project" value="UniProtKB-UniRule"/>
</dbReference>
<dbReference type="GO" id="GO:0030145">
    <property type="term" value="F:manganese ion binding"/>
    <property type="evidence" value="ECO:0007669"/>
    <property type="project" value="InterPro"/>
</dbReference>
<dbReference type="GO" id="GO:0033389">
    <property type="term" value="P:putrescine biosynthetic process from arginine, via agmatine"/>
    <property type="evidence" value="ECO:0007669"/>
    <property type="project" value="TreeGrafter"/>
</dbReference>
<dbReference type="GO" id="GO:0008295">
    <property type="term" value="P:spermidine biosynthetic process"/>
    <property type="evidence" value="ECO:0007669"/>
    <property type="project" value="UniProtKB-UniRule"/>
</dbReference>
<dbReference type="CDD" id="cd11592">
    <property type="entry name" value="Agmatinase_PAH"/>
    <property type="match status" value="1"/>
</dbReference>
<dbReference type="FunFam" id="3.40.800.10:FF:000001">
    <property type="entry name" value="Agmatinase"/>
    <property type="match status" value="1"/>
</dbReference>
<dbReference type="Gene3D" id="3.40.800.10">
    <property type="entry name" value="Ureohydrolase domain"/>
    <property type="match status" value="1"/>
</dbReference>
<dbReference type="HAMAP" id="MF_01418">
    <property type="entry name" value="SpeB"/>
    <property type="match status" value="1"/>
</dbReference>
<dbReference type="InterPro" id="IPR023694">
    <property type="entry name" value="Agmatinase"/>
</dbReference>
<dbReference type="InterPro" id="IPR005925">
    <property type="entry name" value="Agmatinase-rel"/>
</dbReference>
<dbReference type="InterPro" id="IPR006035">
    <property type="entry name" value="Ureohydrolase"/>
</dbReference>
<dbReference type="InterPro" id="IPR023696">
    <property type="entry name" value="Ureohydrolase_dom_sf"/>
</dbReference>
<dbReference type="InterPro" id="IPR020855">
    <property type="entry name" value="Ureohydrolase_Mn_BS"/>
</dbReference>
<dbReference type="NCBIfam" id="TIGR01230">
    <property type="entry name" value="agmatinase"/>
    <property type="match status" value="1"/>
</dbReference>
<dbReference type="NCBIfam" id="NF002564">
    <property type="entry name" value="PRK02190.1"/>
    <property type="match status" value="1"/>
</dbReference>
<dbReference type="PANTHER" id="PTHR11358">
    <property type="entry name" value="ARGINASE/AGMATINASE"/>
    <property type="match status" value="1"/>
</dbReference>
<dbReference type="PANTHER" id="PTHR11358:SF26">
    <property type="entry name" value="GUANIDINO ACID HYDROLASE, MITOCHONDRIAL"/>
    <property type="match status" value="1"/>
</dbReference>
<dbReference type="Pfam" id="PF00491">
    <property type="entry name" value="Arginase"/>
    <property type="match status" value="1"/>
</dbReference>
<dbReference type="PIRSF" id="PIRSF036979">
    <property type="entry name" value="Arginase"/>
    <property type="match status" value="1"/>
</dbReference>
<dbReference type="SUPFAM" id="SSF52768">
    <property type="entry name" value="Arginase/deacetylase"/>
    <property type="match status" value="1"/>
</dbReference>
<dbReference type="PROSITE" id="PS01053">
    <property type="entry name" value="ARGINASE_1"/>
    <property type="match status" value="1"/>
</dbReference>
<dbReference type="PROSITE" id="PS51409">
    <property type="entry name" value="ARGINASE_2"/>
    <property type="match status" value="1"/>
</dbReference>
<comment type="function">
    <text evidence="1">Catalyzes the formation of putrescine from agmatine.</text>
</comment>
<comment type="catalytic activity">
    <reaction evidence="1">
        <text>agmatine + H2O = urea + putrescine</text>
        <dbReference type="Rhea" id="RHEA:13929"/>
        <dbReference type="ChEBI" id="CHEBI:15377"/>
        <dbReference type="ChEBI" id="CHEBI:16199"/>
        <dbReference type="ChEBI" id="CHEBI:58145"/>
        <dbReference type="ChEBI" id="CHEBI:326268"/>
        <dbReference type="EC" id="3.5.3.11"/>
    </reaction>
</comment>
<comment type="cofactor">
    <cofactor evidence="1">
        <name>Mn(2+)</name>
        <dbReference type="ChEBI" id="CHEBI:29035"/>
    </cofactor>
</comment>
<comment type="pathway">
    <text evidence="1">Amine and polyamine biosynthesis; putrescine biosynthesis via agmatine pathway; putrescine from agmatine: step 1/1.</text>
</comment>
<comment type="similarity">
    <text evidence="1">Belongs to the arginase family. Agmatinase subfamily.</text>
</comment>
<proteinExistence type="inferred from homology"/>
<reference key="1">
    <citation type="journal article" date="2006" name="Mol. Microbiol.">
        <title>Role of pathogenicity island-associated integrases in the genome plasticity of uropathogenic Escherichia coli strain 536.</title>
        <authorList>
            <person name="Hochhut B."/>
            <person name="Wilde C."/>
            <person name="Balling G."/>
            <person name="Middendorf B."/>
            <person name="Dobrindt U."/>
            <person name="Brzuszkiewicz E."/>
            <person name="Gottschalk G."/>
            <person name="Carniel E."/>
            <person name="Hacker J."/>
        </authorList>
    </citation>
    <scope>NUCLEOTIDE SEQUENCE [LARGE SCALE GENOMIC DNA]</scope>
    <source>
        <strain>536 / UPEC</strain>
    </source>
</reference>
<organism>
    <name type="scientific">Escherichia coli O6:K15:H31 (strain 536 / UPEC)</name>
    <dbReference type="NCBI Taxonomy" id="362663"/>
    <lineage>
        <taxon>Bacteria</taxon>
        <taxon>Pseudomonadati</taxon>
        <taxon>Pseudomonadota</taxon>
        <taxon>Gammaproteobacteria</taxon>
        <taxon>Enterobacterales</taxon>
        <taxon>Enterobacteriaceae</taxon>
        <taxon>Escherichia</taxon>
    </lineage>
</organism>
<keyword id="KW-0378">Hydrolase</keyword>
<keyword id="KW-0464">Manganese</keyword>
<keyword id="KW-0479">Metal-binding</keyword>
<keyword id="KW-0620">Polyamine biosynthesis</keyword>
<keyword id="KW-0661">Putrescine biosynthesis</keyword>
<keyword id="KW-0745">Spermidine biosynthesis</keyword>
<evidence type="ECO:0000255" key="1">
    <source>
        <dbReference type="HAMAP-Rule" id="MF_01418"/>
    </source>
</evidence>
<name>SPEB_ECOL5</name>
<feature type="chain" id="PRO_1000024279" description="Agmatinase">
    <location>
        <begin position="1"/>
        <end position="306"/>
    </location>
</feature>
<feature type="binding site" evidence="1">
    <location>
        <position position="126"/>
    </location>
    <ligand>
        <name>Mn(2+)</name>
        <dbReference type="ChEBI" id="CHEBI:29035"/>
    </ligand>
</feature>
<feature type="binding site" evidence="1">
    <location>
        <position position="149"/>
    </location>
    <ligand>
        <name>Mn(2+)</name>
        <dbReference type="ChEBI" id="CHEBI:29035"/>
    </ligand>
</feature>
<feature type="binding site" evidence="1">
    <location>
        <position position="151"/>
    </location>
    <ligand>
        <name>Mn(2+)</name>
        <dbReference type="ChEBI" id="CHEBI:29035"/>
    </ligand>
</feature>
<feature type="binding site" evidence="1">
    <location>
        <position position="153"/>
    </location>
    <ligand>
        <name>Mn(2+)</name>
        <dbReference type="ChEBI" id="CHEBI:29035"/>
    </ligand>
</feature>
<feature type="binding site" evidence="1">
    <location>
        <position position="230"/>
    </location>
    <ligand>
        <name>Mn(2+)</name>
        <dbReference type="ChEBI" id="CHEBI:29035"/>
    </ligand>
</feature>
<feature type="binding site" evidence="1">
    <location>
        <position position="232"/>
    </location>
    <ligand>
        <name>Mn(2+)</name>
        <dbReference type="ChEBI" id="CHEBI:29035"/>
    </ligand>
</feature>
<sequence length="306" mass="33571">MSTLGHQYDNSLVSNAFGFLRLPMNFQPYDSDADWVITGVPFDMATSGRAGGRHGPAAIRQVSTNLAWEHNRFPWNFDMRERLNVVDCGDLVYAFGDAREMSEKLQAHAEKLLAAGKRMLSFGGDHFVTLPLLRAHAKHFGKMALVHFDAHTDTYANGCEFDHGTMFYTAPKEGLIDPNHSVQIGIRTEFDKDNGFTVLDACQVNDRSVDDIIAQVKQIVGDMPVYLTFDIDCLDPAFAPGTGTPVIGGLTSDRAIKLVRGLKDLNIVGMDVVEVAPAYDQSEITALAAATLALEMLYIQAAKKGE</sequence>